<organism>
    <name type="scientific">Coxiella burnetii (strain RSA 493 / Nine Mile phase I)</name>
    <dbReference type="NCBI Taxonomy" id="227377"/>
    <lineage>
        <taxon>Bacteria</taxon>
        <taxon>Pseudomonadati</taxon>
        <taxon>Pseudomonadota</taxon>
        <taxon>Gammaproteobacteria</taxon>
        <taxon>Legionellales</taxon>
        <taxon>Coxiellaceae</taxon>
        <taxon>Coxiella</taxon>
    </lineage>
</organism>
<comment type="function">
    <text evidence="1">Participates actively in the response to hyperosmotic and heat shock by preventing the aggregation of stress-denatured proteins, in association with DnaK and GrpE. It is the nucleotide exchange factor for DnaK and may function as a thermosensor. Unfolded proteins bind initially to DnaJ; upon interaction with the DnaJ-bound protein, DnaK hydrolyzes its bound ATP, resulting in the formation of a stable complex. GrpE releases ADP from DnaK; ATP binding to DnaK triggers the release of the substrate protein, thus completing the reaction cycle. Several rounds of ATP-dependent interactions between DnaJ, DnaK and GrpE are required for fully efficient folding.</text>
</comment>
<comment type="subunit">
    <text evidence="1">Homodimer.</text>
</comment>
<comment type="subcellular location">
    <subcellularLocation>
        <location evidence="1">Cytoplasm</location>
    </subcellularLocation>
</comment>
<comment type="similarity">
    <text evidence="1">Belongs to the GrpE family.</text>
</comment>
<comment type="sequence caution" evidence="3">
    <conflict type="erroneous initiation">
        <sequence resource="EMBL-CDS" id="AAO90799"/>
    </conflict>
</comment>
<name>GRPE_COXBU</name>
<dbReference type="EMBL" id="AE016828">
    <property type="protein sequence ID" value="AAO90799.2"/>
    <property type="status" value="ALT_INIT"/>
    <property type="molecule type" value="Genomic_DNA"/>
</dbReference>
<dbReference type="RefSeq" id="NP_820285.2">
    <property type="nucleotide sequence ID" value="NC_002971.3"/>
</dbReference>
<dbReference type="SMR" id="Q83C41"/>
<dbReference type="STRING" id="227377.CBU_1293"/>
<dbReference type="EnsemblBacteria" id="AAO90799">
    <property type="protein sequence ID" value="AAO90799"/>
    <property type="gene ID" value="CBU_1293"/>
</dbReference>
<dbReference type="GeneID" id="1209198"/>
<dbReference type="KEGG" id="cbu:CBU_1293"/>
<dbReference type="PATRIC" id="fig|227377.7.peg.1288"/>
<dbReference type="eggNOG" id="COG0576">
    <property type="taxonomic scope" value="Bacteria"/>
</dbReference>
<dbReference type="HOGENOM" id="CLU_057217_6_0_6"/>
<dbReference type="OrthoDB" id="9789811at2"/>
<dbReference type="Proteomes" id="UP000002671">
    <property type="component" value="Chromosome"/>
</dbReference>
<dbReference type="GO" id="GO:0005829">
    <property type="term" value="C:cytosol"/>
    <property type="evidence" value="ECO:0000318"/>
    <property type="project" value="GO_Central"/>
</dbReference>
<dbReference type="GO" id="GO:0000774">
    <property type="term" value="F:adenyl-nucleotide exchange factor activity"/>
    <property type="evidence" value="ECO:0000318"/>
    <property type="project" value="GO_Central"/>
</dbReference>
<dbReference type="GO" id="GO:0042803">
    <property type="term" value="F:protein homodimerization activity"/>
    <property type="evidence" value="ECO:0007669"/>
    <property type="project" value="InterPro"/>
</dbReference>
<dbReference type="GO" id="GO:0051087">
    <property type="term" value="F:protein-folding chaperone binding"/>
    <property type="evidence" value="ECO:0007669"/>
    <property type="project" value="InterPro"/>
</dbReference>
<dbReference type="GO" id="GO:0051082">
    <property type="term" value="F:unfolded protein binding"/>
    <property type="evidence" value="ECO:0000318"/>
    <property type="project" value="GO_Central"/>
</dbReference>
<dbReference type="GO" id="GO:0006457">
    <property type="term" value="P:protein folding"/>
    <property type="evidence" value="ECO:0007669"/>
    <property type="project" value="InterPro"/>
</dbReference>
<dbReference type="CDD" id="cd00446">
    <property type="entry name" value="GrpE"/>
    <property type="match status" value="1"/>
</dbReference>
<dbReference type="FunFam" id="2.30.22.10:FF:000001">
    <property type="entry name" value="Protein GrpE"/>
    <property type="match status" value="1"/>
</dbReference>
<dbReference type="Gene3D" id="3.90.20.20">
    <property type="match status" value="1"/>
</dbReference>
<dbReference type="Gene3D" id="2.30.22.10">
    <property type="entry name" value="Head domain of nucleotide exchange factor GrpE"/>
    <property type="match status" value="1"/>
</dbReference>
<dbReference type="HAMAP" id="MF_01151">
    <property type="entry name" value="GrpE"/>
    <property type="match status" value="1"/>
</dbReference>
<dbReference type="InterPro" id="IPR000740">
    <property type="entry name" value="GrpE"/>
</dbReference>
<dbReference type="InterPro" id="IPR013805">
    <property type="entry name" value="GrpE_coiled_coil"/>
</dbReference>
<dbReference type="InterPro" id="IPR009012">
    <property type="entry name" value="GrpE_head"/>
</dbReference>
<dbReference type="NCBIfam" id="NF010751">
    <property type="entry name" value="PRK14154.1"/>
    <property type="match status" value="1"/>
</dbReference>
<dbReference type="PANTHER" id="PTHR21237">
    <property type="entry name" value="GRPE PROTEIN"/>
    <property type="match status" value="1"/>
</dbReference>
<dbReference type="PANTHER" id="PTHR21237:SF23">
    <property type="entry name" value="GRPE PROTEIN HOMOLOG, MITOCHONDRIAL"/>
    <property type="match status" value="1"/>
</dbReference>
<dbReference type="Pfam" id="PF01025">
    <property type="entry name" value="GrpE"/>
    <property type="match status" value="1"/>
</dbReference>
<dbReference type="PRINTS" id="PR00773">
    <property type="entry name" value="GRPEPROTEIN"/>
</dbReference>
<dbReference type="SUPFAM" id="SSF58014">
    <property type="entry name" value="Coiled-coil domain of nucleotide exchange factor GrpE"/>
    <property type="match status" value="1"/>
</dbReference>
<dbReference type="SUPFAM" id="SSF51064">
    <property type="entry name" value="Head domain of nucleotide exchange factor GrpE"/>
    <property type="match status" value="1"/>
</dbReference>
<dbReference type="PROSITE" id="PS01071">
    <property type="entry name" value="GRPE"/>
    <property type="match status" value="1"/>
</dbReference>
<proteinExistence type="inferred from homology"/>
<protein>
    <recommendedName>
        <fullName evidence="1">Protein GrpE</fullName>
    </recommendedName>
    <alternativeName>
        <fullName evidence="1">HSP-70 cofactor</fullName>
    </alternativeName>
</protein>
<keyword id="KW-0143">Chaperone</keyword>
<keyword id="KW-0963">Cytoplasm</keyword>
<keyword id="KW-1185">Reference proteome</keyword>
<keyword id="KW-0346">Stress response</keyword>
<accession>Q83C41</accession>
<reference key="1">
    <citation type="journal article" date="2003" name="Proc. Natl. Acad. Sci. U.S.A.">
        <title>Complete genome sequence of the Q-fever pathogen, Coxiella burnetii.</title>
        <authorList>
            <person name="Seshadri R."/>
            <person name="Paulsen I.T."/>
            <person name="Eisen J.A."/>
            <person name="Read T.D."/>
            <person name="Nelson K.E."/>
            <person name="Nelson W.C."/>
            <person name="Ward N.L."/>
            <person name="Tettelin H."/>
            <person name="Davidsen T.M."/>
            <person name="Beanan M.J."/>
            <person name="DeBoy R.T."/>
            <person name="Daugherty S.C."/>
            <person name="Brinkac L.M."/>
            <person name="Madupu R."/>
            <person name="Dodson R.J."/>
            <person name="Khouri H.M."/>
            <person name="Lee K.H."/>
            <person name="Carty H.A."/>
            <person name="Scanlan D."/>
            <person name="Heinzen R.A."/>
            <person name="Thompson H.A."/>
            <person name="Samuel J.E."/>
            <person name="Fraser C.M."/>
            <person name="Heidelberg J.F."/>
        </authorList>
    </citation>
    <scope>NUCLEOTIDE SEQUENCE [LARGE SCALE GENOMIC DNA]</scope>
    <source>
        <strain>RSA 493 / Nine Mile phase I</strain>
    </source>
</reference>
<feature type="chain" id="PRO_0000113779" description="Protein GrpE">
    <location>
        <begin position="1"/>
        <end position="204"/>
    </location>
</feature>
<feature type="region of interest" description="Disordered" evidence="2">
    <location>
        <begin position="1"/>
        <end position="55"/>
    </location>
</feature>
<feature type="compositionally biased region" description="Basic and acidic residues" evidence="2">
    <location>
        <begin position="7"/>
        <end position="22"/>
    </location>
</feature>
<feature type="compositionally biased region" description="Basic and acidic residues" evidence="2">
    <location>
        <begin position="29"/>
        <end position="55"/>
    </location>
</feature>
<evidence type="ECO:0000255" key="1">
    <source>
        <dbReference type="HAMAP-Rule" id="MF_01151"/>
    </source>
</evidence>
<evidence type="ECO:0000256" key="2">
    <source>
        <dbReference type="SAM" id="MobiDB-lite"/>
    </source>
</evidence>
<evidence type="ECO:0000305" key="3"/>
<gene>
    <name evidence="1" type="primary">grpE</name>
    <name type="ordered locus">CBU_1293</name>
</gene>
<sequence length="204" mass="22952">MSSKNNPESETKAKNKWEKVMEAEEEQEEGRGDGSQEMEPHREGLEFPSREKLEGQLTRMERKVDEYKTQYLRAQAEMDNLRKRIEREKADIIKFGSKQLITDLLPVADSLIHGLESPASEDPQVKSMRDGMSLTLDLLHNTLAKHGVQVINPNPGDPFDPALHEAMSVQAVPDAKPDTIIQVLQKGYQLNGRVLRAARVIVAG</sequence>